<name>B4GN1_RAT</name>
<comment type="function">
    <text evidence="4 5 6">Involved in the biosynthesis of gangliosides GM2, GD2, GT2 and GA2 from GM3, GD3, GT3 and GA3, respectively.</text>
</comment>
<comment type="catalytic activity">
    <reaction evidence="5 6">
        <text>a ganglioside GM3 (d18:1(4E)) + UDP-N-acetyl-alpha-D-galactosamine = a ganglioside GM2 (d18:1(4E)) + UDP + H(+)</text>
        <dbReference type="Rhea" id="RHEA:12588"/>
        <dbReference type="ChEBI" id="CHEBI:15378"/>
        <dbReference type="ChEBI" id="CHEBI:58223"/>
        <dbReference type="ChEBI" id="CHEBI:60065"/>
        <dbReference type="ChEBI" id="CHEBI:67138"/>
        <dbReference type="ChEBI" id="CHEBI:71502"/>
        <dbReference type="EC" id="2.4.1.92"/>
    </reaction>
    <physiologicalReaction direction="left-to-right" evidence="5 6">
        <dbReference type="Rhea" id="RHEA:12589"/>
    </physiologicalReaction>
</comment>
<comment type="catalytic activity">
    <reaction evidence="6">
        <text>a ganglioside GD3 (d18:1(4E)) + UDP-N-acetyl-alpha-D-galactosamine = a ganglioside GD2 (d18:1(4E)) + UDP + H(+)</text>
        <dbReference type="Rhea" id="RHEA:41816"/>
        <dbReference type="ChEBI" id="CHEBI:15378"/>
        <dbReference type="ChEBI" id="CHEBI:58223"/>
        <dbReference type="ChEBI" id="CHEBI:67138"/>
        <dbReference type="ChEBI" id="CHEBI:78436"/>
        <dbReference type="ChEBI" id="CHEBI:78542"/>
    </reaction>
    <physiologicalReaction direction="left-to-right" evidence="6">
        <dbReference type="Rhea" id="RHEA:41817"/>
    </physiologicalReaction>
</comment>
<comment type="catalytic activity">
    <reaction evidence="4 6">
        <text>a ganglioside GM3 + UDP-N-acetyl-alpha-D-galactosamine = a ganglioside GM2 + UDP + H(+)</text>
        <dbReference type="Rhea" id="RHEA:43268"/>
        <dbReference type="ChEBI" id="CHEBI:15378"/>
        <dbReference type="ChEBI" id="CHEBI:58223"/>
        <dbReference type="ChEBI" id="CHEBI:67138"/>
        <dbReference type="ChEBI" id="CHEBI:79210"/>
        <dbReference type="ChEBI" id="CHEBI:79218"/>
    </reaction>
    <physiologicalReaction direction="left-to-right" evidence="4 6">
        <dbReference type="Rhea" id="RHEA:43269"/>
    </physiologicalReaction>
</comment>
<comment type="catalytic activity">
    <reaction evidence="6">
        <text>a ganglioside GD3 + UDP-N-acetyl-alpha-D-galactosamine = a ganglioside GD2 + UDP + H(+)</text>
        <dbReference type="Rhea" id="RHEA:43272"/>
        <dbReference type="ChEBI" id="CHEBI:15378"/>
        <dbReference type="ChEBI" id="CHEBI:58223"/>
        <dbReference type="ChEBI" id="CHEBI:67138"/>
        <dbReference type="ChEBI" id="CHEBI:79214"/>
        <dbReference type="ChEBI" id="CHEBI:79220"/>
    </reaction>
    <physiologicalReaction direction="left-to-right" evidence="6">
        <dbReference type="Rhea" id="RHEA:43273"/>
    </physiologicalReaction>
</comment>
<comment type="catalytic activity">
    <reaction evidence="6">
        <text>a ganglioside GD1a + UDP-N-acetyl-alpha-D-galactosamine = a ganglioside GalNAc-GD1a + UDP + H(+)</text>
        <dbReference type="Rhea" id="RHEA:43276"/>
        <dbReference type="ChEBI" id="CHEBI:15378"/>
        <dbReference type="ChEBI" id="CHEBI:58223"/>
        <dbReference type="ChEBI" id="CHEBI:67138"/>
        <dbReference type="ChEBI" id="CHEBI:82637"/>
        <dbReference type="ChEBI" id="CHEBI:82945"/>
    </reaction>
    <physiologicalReaction direction="left-to-right" evidence="6">
        <dbReference type="Rhea" id="RHEA:43277"/>
    </physiologicalReaction>
</comment>
<comment type="catalytic activity">
    <reaction evidence="4">
        <text>a ganglioside GT3 (d18:1(4E)) + UDP-N-acetyl-alpha-D-galactosamine = a ganglioside GT2 (d18:1(4E)) + UDP + H(+)</text>
        <dbReference type="Rhea" id="RHEA:47580"/>
        <dbReference type="ChEBI" id="CHEBI:15378"/>
        <dbReference type="ChEBI" id="CHEBI:58223"/>
        <dbReference type="ChEBI" id="CHEBI:67138"/>
        <dbReference type="ChEBI" id="CHEBI:78438"/>
        <dbReference type="ChEBI" id="CHEBI:87788"/>
    </reaction>
    <physiologicalReaction direction="left-to-right" evidence="4">
        <dbReference type="Rhea" id="RHEA:47581"/>
    </physiologicalReaction>
</comment>
<comment type="catalytic activity">
    <reaction evidence="5">
        <text>a beta-D-Gal-(1-&gt;4)-beta-D-Glc-(1&lt;-&gt;1)-Cer(d18:1(4E)) + UDP-N-acetyl-alpha-D-galactosamine = a ganglioside GA2 (d18:1(4E)) + UDP + H(+)</text>
        <dbReference type="Rhea" id="RHEA:47564"/>
        <dbReference type="ChEBI" id="CHEBI:15378"/>
        <dbReference type="ChEBI" id="CHEBI:17950"/>
        <dbReference type="ChEBI" id="CHEBI:27731"/>
        <dbReference type="ChEBI" id="CHEBI:58223"/>
        <dbReference type="ChEBI" id="CHEBI:67138"/>
    </reaction>
    <physiologicalReaction direction="left-to-right" evidence="5">
        <dbReference type="Rhea" id="RHEA:47565"/>
    </physiologicalReaction>
</comment>
<comment type="catalytic activity">
    <reaction evidence="6">
        <text>a neolactoside IV(3)-alpha-NeuGc-nLc4Cer + UDP-N-acetyl-alpha-D-galactosamine = a neolactoside IV(4)-beta-GalNAc-IV(3)-alpha-NeuGc-nLc4Cer + UDP + H(+)</text>
        <dbReference type="Rhea" id="RHEA:43300"/>
        <dbReference type="ChEBI" id="CHEBI:15378"/>
        <dbReference type="ChEBI" id="CHEBI:58223"/>
        <dbReference type="ChEBI" id="CHEBI:67138"/>
        <dbReference type="ChEBI" id="CHEBI:82950"/>
        <dbReference type="ChEBI" id="CHEBI:82951"/>
    </reaction>
    <physiologicalReaction direction="left-to-right" evidence="6">
        <dbReference type="Rhea" id="RHEA:43301"/>
    </physiologicalReaction>
</comment>
<comment type="biophysicochemical properties">
    <kinetics>
        <KM evidence="5">117 uM for GM3</KM>
        <KM evidence="5">68 uM for GD3</KM>
        <KM evidence="5">437 uM for lactosylceramide</KM>
        <KM evidence="4">47 uM for GM3</KM>
        <KM evidence="4">45 uM for GT3</KM>
        <Vmax evidence="5">6.2 nmol/h/mg enzyme toward GM3</Vmax>
        <Vmax evidence="5">3.9 nmol/h/mg enzyme toward GD3</Vmax>
        <Vmax evidence="5">0.7 nmol/h/mg enzyme toward lactosylceramide</Vmax>
        <Vmax evidence="4">1.5 nmol/h/mg enzyme toward GM3</Vmax>
        <Vmax evidence="4">0.8 nmol/h/mg enzyme toward GT3</Vmax>
    </kinetics>
</comment>
<comment type="pathway">
    <text evidence="4 5 6">Sphingolipid metabolism.</text>
</comment>
<comment type="subunit">
    <text evidence="1">Homodimer; disulfide-linked.</text>
</comment>
<comment type="subcellular location">
    <subcellularLocation>
        <location evidence="4 5">Golgi apparatus membrane</location>
        <topology evidence="3">Single-pass type II membrane protein</topology>
    </subcellularLocation>
</comment>
<comment type="tissue specificity">
    <text evidence="4 5 6">Strongly expressed in brain, testis, spleen, and to a lesser extent in liver.</text>
</comment>
<comment type="similarity">
    <text evidence="9">Belongs to the glycosyltransferase 2 family.</text>
</comment>
<protein>
    <recommendedName>
        <fullName evidence="9">Beta-1,4 N-acetylgalactosaminyltransferase 1</fullName>
        <ecNumber evidence="5 6">2.4.1.92</ecNumber>
    </recommendedName>
    <alternativeName>
        <fullName>(N-acetylneuraminyl)-galactosylglucosylceramide</fullName>
    </alternativeName>
    <alternativeName>
        <fullName evidence="8">GA2 synthase</fullName>
        <ecNumber evidence="5">2.4.1.-</ecNumber>
    </alternativeName>
    <alternativeName>
        <fullName evidence="8">GD2 synthase</fullName>
        <ecNumber evidence="5">2.4.1.-</ecNumber>
    </alternativeName>
    <alternativeName>
        <fullName evidence="8">GM2 synthase</fullName>
        <ecNumber evidence="5">2.4.1.92</ecNumber>
    </alternativeName>
    <alternativeName>
        <fullName evidence="7 8">GalNAc-T</fullName>
    </alternativeName>
</protein>
<accession>Q10468</accession>
<proteinExistence type="evidence at protein level"/>
<sequence length="533" mass="59279">MRLDRRALYALVLLLACASLGLLYASTRDAPGLPNPLALWSPPQGPPRLDLLDLATEPRYAHIPVRIKEQVVGLLAQNNCSCESSGGRFALPFLRQVRAIDFTKAFDAEELRAVSISREQEYQAFLARSRSLADQLLIAPANSPLQYPLQGVEVQPLRSILVPGLSLQEASVQEIYQVNLIASLGTWDVAGEVTGVTLTGEGQSDLTLASPILDKLNRQLQLVTYSSRSYQANTADTVRFSTKGHEVAFTILIRHPPNPRLYPPSSLPQGAQYNISALVTVATKTFLRYDRLRALIASIRRFYPTVTIVIADDSDKPERISDPHVEHYFMPFGKGWFAGRNLAVSQVTTKYVLWVDDDFVFTARTRLEKLVDVLERTPLDLVGGAVREISGYATTYRQLLSVEPGAPGFGNCLRQKQGFHHELAGFPNCVVTDGVVNFFLARTDKVRQVGFDPRLNRVAHLEFFLDGLGSLRVGSCSDVVVDHASKVKLPWTSKDPGAELYARYRYPGSLDQSQVAKHRLLFFKHRLQCMTAE</sequence>
<keyword id="KW-1015">Disulfide bond</keyword>
<keyword id="KW-0325">Glycoprotein</keyword>
<keyword id="KW-0328">Glycosyltransferase</keyword>
<keyword id="KW-0333">Golgi apparatus</keyword>
<keyword id="KW-0443">Lipid metabolism</keyword>
<keyword id="KW-0472">Membrane</keyword>
<keyword id="KW-1185">Reference proteome</keyword>
<keyword id="KW-0735">Signal-anchor</keyword>
<keyword id="KW-0746">Sphingolipid metabolism</keyword>
<keyword id="KW-0808">Transferase</keyword>
<keyword id="KW-0812">Transmembrane</keyword>
<keyword id="KW-1133">Transmembrane helix</keyword>
<organism>
    <name type="scientific">Rattus norvegicus</name>
    <name type="common">Rat</name>
    <dbReference type="NCBI Taxonomy" id="10116"/>
    <lineage>
        <taxon>Eukaryota</taxon>
        <taxon>Metazoa</taxon>
        <taxon>Chordata</taxon>
        <taxon>Craniata</taxon>
        <taxon>Vertebrata</taxon>
        <taxon>Euteleostomi</taxon>
        <taxon>Mammalia</taxon>
        <taxon>Eutheria</taxon>
        <taxon>Euarchontoglires</taxon>
        <taxon>Glires</taxon>
        <taxon>Rodentia</taxon>
        <taxon>Myomorpha</taxon>
        <taxon>Muroidea</taxon>
        <taxon>Muridae</taxon>
        <taxon>Murinae</taxon>
        <taxon>Rattus</taxon>
    </lineage>
</organism>
<evidence type="ECO:0000250" key="1"/>
<evidence type="ECO:0000250" key="2">
    <source>
        <dbReference type="UniProtKB" id="Q00973"/>
    </source>
</evidence>
<evidence type="ECO:0000255" key="3"/>
<evidence type="ECO:0000269" key="4">
    <source>
    </source>
</evidence>
<evidence type="ECO:0000269" key="5">
    <source>
    </source>
</evidence>
<evidence type="ECO:0000269" key="6">
    <source>
    </source>
</evidence>
<evidence type="ECO:0000303" key="7">
    <source>
    </source>
</evidence>
<evidence type="ECO:0000303" key="8">
    <source>
    </source>
</evidence>
<evidence type="ECO:0000305" key="9"/>
<evidence type="ECO:0000312" key="10">
    <source>
        <dbReference type="RGD" id="620490"/>
    </source>
</evidence>
<feature type="chain" id="PRO_0000059102" description="Beta-1,4 N-acetylgalactosaminyltransferase 1">
    <location>
        <begin position="1"/>
        <end position="533"/>
    </location>
</feature>
<feature type="topological domain" description="Cytoplasmic" evidence="3">
    <location>
        <begin position="1"/>
        <end position="7"/>
    </location>
</feature>
<feature type="transmembrane region" description="Helical; Signal-anchor for type II membrane protein" evidence="3">
    <location>
        <begin position="8"/>
        <end position="25"/>
    </location>
</feature>
<feature type="topological domain" description="Lumenal" evidence="3">
    <location>
        <begin position="26"/>
        <end position="533"/>
    </location>
</feature>
<feature type="glycosylation site" description="N-linked (GlcNAc...) asparagine" evidence="3">
    <location>
        <position position="79"/>
    </location>
</feature>
<feature type="glycosylation site" description="N-linked (GlcNAc...) asparagine" evidence="3">
    <location>
        <position position="274"/>
    </location>
</feature>
<feature type="disulfide bond" description="Interchain (with C-412)" evidence="2">
    <location>
        <position position="80"/>
    </location>
</feature>
<feature type="disulfide bond" description="Interchain (with C-529)" evidence="2">
    <location>
        <position position="82"/>
    </location>
</feature>
<feature type="disulfide bond" description="Interchain (with C-80)" evidence="2">
    <location>
        <position position="412"/>
    </location>
</feature>
<feature type="disulfide bond" evidence="2">
    <location>
        <begin position="429"/>
        <end position="476"/>
    </location>
</feature>
<feature type="disulfide bond" description="Interchain (with C-82)" evidence="2">
    <location>
        <position position="529"/>
    </location>
</feature>
<dbReference type="EC" id="2.4.1.92" evidence="5 6"/>
<dbReference type="EC" id="2.4.1.-" evidence="5"/>
<dbReference type="EMBL" id="D17809">
    <property type="protein sequence ID" value="BAA04632.1"/>
    <property type="molecule type" value="mRNA"/>
</dbReference>
<dbReference type="EMBL" id="BC081799">
    <property type="protein sequence ID" value="AAH81799.1"/>
    <property type="molecule type" value="mRNA"/>
</dbReference>
<dbReference type="PIR" id="S53320">
    <property type="entry name" value="S53320"/>
</dbReference>
<dbReference type="RefSeq" id="NP_074051.1">
    <property type="nucleotide sequence ID" value="NM_022860.2"/>
</dbReference>
<dbReference type="RefSeq" id="XP_017450589.1">
    <property type="nucleotide sequence ID" value="XM_017595100.1"/>
</dbReference>
<dbReference type="RefSeq" id="XP_038935786.2">
    <property type="nucleotide sequence ID" value="XM_039079858.2"/>
</dbReference>
<dbReference type="RefSeq" id="XP_063120286.1">
    <property type="nucleotide sequence ID" value="XM_063264216.1"/>
</dbReference>
<dbReference type="FunCoup" id="Q10468">
    <property type="interactions" value="1718"/>
</dbReference>
<dbReference type="STRING" id="10116.ENSRNOP00000048586"/>
<dbReference type="SwissLipids" id="SLP:000000769"/>
<dbReference type="CAZy" id="GT12">
    <property type="family name" value="Glycosyltransferase Family 12"/>
</dbReference>
<dbReference type="GlyCosmos" id="Q10468">
    <property type="glycosylation" value="2 sites, No reported glycans"/>
</dbReference>
<dbReference type="GlyGen" id="Q10468">
    <property type="glycosylation" value="2 sites"/>
</dbReference>
<dbReference type="PhosphoSitePlus" id="Q10468"/>
<dbReference type="PaxDb" id="10116-ENSRNOP00000048586"/>
<dbReference type="GeneID" id="64828"/>
<dbReference type="KEGG" id="rno:64828"/>
<dbReference type="UCSC" id="RGD:620490">
    <property type="organism name" value="rat"/>
</dbReference>
<dbReference type="AGR" id="RGD:620490"/>
<dbReference type="CTD" id="2583"/>
<dbReference type="RGD" id="620490">
    <property type="gene designation" value="B4galnt1"/>
</dbReference>
<dbReference type="VEuPathDB" id="HostDB:ENSRNOG00000004839"/>
<dbReference type="eggNOG" id="ENOG502QTK7">
    <property type="taxonomic scope" value="Eukaryota"/>
</dbReference>
<dbReference type="HOGENOM" id="CLU_036051_0_0_1"/>
<dbReference type="InParanoid" id="Q10468"/>
<dbReference type="OrthoDB" id="2139606at2759"/>
<dbReference type="PhylomeDB" id="Q10468"/>
<dbReference type="TreeFam" id="TF332297"/>
<dbReference type="BRENDA" id="2.4.1.92">
    <property type="organism ID" value="5301"/>
</dbReference>
<dbReference type="Reactome" id="R-RNO-9840309">
    <property type="pathway name" value="Glycosphingolipid biosynthesis"/>
</dbReference>
<dbReference type="PRO" id="PR:Q10468"/>
<dbReference type="Proteomes" id="UP000002494">
    <property type="component" value="Chromosome 7"/>
</dbReference>
<dbReference type="Bgee" id="ENSRNOG00000004839">
    <property type="expression patterns" value="Expressed in thymus and 20 other cell types or tissues"/>
</dbReference>
<dbReference type="GO" id="GO:0005794">
    <property type="term" value="C:Golgi apparatus"/>
    <property type="evidence" value="ECO:0000314"/>
    <property type="project" value="UniProtKB"/>
</dbReference>
<dbReference type="GO" id="GO:0000139">
    <property type="term" value="C:Golgi membrane"/>
    <property type="evidence" value="ECO:0000314"/>
    <property type="project" value="UniProtKB"/>
</dbReference>
<dbReference type="GO" id="GO:0003947">
    <property type="term" value="F:(N-acetylneuraminyl)-galactosylglucosylceramide N-acetylgalactosaminyltransferase activity"/>
    <property type="evidence" value="ECO:0000314"/>
    <property type="project" value="UniProtKB"/>
</dbReference>
<dbReference type="GO" id="GO:0008376">
    <property type="term" value="F:acetylgalactosaminyltransferase activity"/>
    <property type="evidence" value="ECO:0000314"/>
    <property type="project" value="UniProtKB"/>
</dbReference>
<dbReference type="GO" id="GO:0008340">
    <property type="term" value="P:determination of adult lifespan"/>
    <property type="evidence" value="ECO:0000266"/>
    <property type="project" value="RGD"/>
</dbReference>
<dbReference type="GO" id="GO:0001574">
    <property type="term" value="P:ganglioside biosynthetic process"/>
    <property type="evidence" value="ECO:0000314"/>
    <property type="project" value="UniProtKB"/>
</dbReference>
<dbReference type="GO" id="GO:0006688">
    <property type="term" value="P:glycosphingolipid biosynthetic process"/>
    <property type="evidence" value="ECO:0000314"/>
    <property type="project" value="UniProtKB"/>
</dbReference>
<dbReference type="GO" id="GO:0006687">
    <property type="term" value="P:glycosphingolipid metabolic process"/>
    <property type="evidence" value="ECO:0000314"/>
    <property type="project" value="UniProtKB"/>
</dbReference>
<dbReference type="GO" id="GO:0060173">
    <property type="term" value="P:limb development"/>
    <property type="evidence" value="ECO:0000266"/>
    <property type="project" value="RGD"/>
</dbReference>
<dbReference type="GO" id="GO:0030259">
    <property type="term" value="P:lipid glycosylation"/>
    <property type="evidence" value="ECO:0007669"/>
    <property type="project" value="InterPro"/>
</dbReference>
<dbReference type="GO" id="GO:0019915">
    <property type="term" value="P:lipid storage"/>
    <property type="evidence" value="ECO:0000266"/>
    <property type="project" value="RGD"/>
</dbReference>
<dbReference type="GO" id="GO:0061744">
    <property type="term" value="P:motor behavior"/>
    <property type="evidence" value="ECO:0000266"/>
    <property type="project" value="RGD"/>
</dbReference>
<dbReference type="GO" id="GO:0021675">
    <property type="term" value="P:nerve development"/>
    <property type="evidence" value="ECO:0000266"/>
    <property type="project" value="RGD"/>
</dbReference>
<dbReference type="GO" id="GO:0007283">
    <property type="term" value="P:spermatogenesis"/>
    <property type="evidence" value="ECO:0000266"/>
    <property type="project" value="RGD"/>
</dbReference>
<dbReference type="GO" id="GO:0007033">
    <property type="term" value="P:vacuole organization"/>
    <property type="evidence" value="ECO:0000266"/>
    <property type="project" value="RGD"/>
</dbReference>
<dbReference type="CDD" id="cd00761">
    <property type="entry name" value="Glyco_tranf_GTA_type"/>
    <property type="match status" value="1"/>
</dbReference>
<dbReference type="FunFam" id="3.90.550.10:FF:000076">
    <property type="entry name" value="Beta-1,4 N-acetylgalactosaminyltransferase"/>
    <property type="match status" value="1"/>
</dbReference>
<dbReference type="Gene3D" id="3.90.550.10">
    <property type="entry name" value="Spore Coat Polysaccharide Biosynthesis Protein SpsA, Chain A"/>
    <property type="match status" value="1"/>
</dbReference>
<dbReference type="InterPro" id="IPR001173">
    <property type="entry name" value="Glyco_trans_2-like"/>
</dbReference>
<dbReference type="InterPro" id="IPR011143">
    <property type="entry name" value="GM2_synthase"/>
</dbReference>
<dbReference type="InterPro" id="IPR029044">
    <property type="entry name" value="Nucleotide-diphossugar_trans"/>
</dbReference>
<dbReference type="PANTHER" id="PTHR15046:SF1">
    <property type="entry name" value="BETA-1,4 N-ACETYLGALACTOSAMINYLTRANSFERASE 1"/>
    <property type="match status" value="1"/>
</dbReference>
<dbReference type="PANTHER" id="PTHR15046">
    <property type="entry name" value="GLYCO_TRANS_2-LIKE DOMAIN-CONTAINING PROTEIN"/>
    <property type="match status" value="1"/>
</dbReference>
<dbReference type="Pfam" id="PF00535">
    <property type="entry name" value="Glycos_transf_2"/>
    <property type="match status" value="1"/>
</dbReference>
<dbReference type="PIRSF" id="PIRSF000474">
    <property type="entry name" value="GM2_GD2_synthase"/>
    <property type="match status" value="1"/>
</dbReference>
<dbReference type="SUPFAM" id="SSF53448">
    <property type="entry name" value="Nucleotide-diphospho-sugar transferases"/>
    <property type="match status" value="1"/>
</dbReference>
<gene>
    <name evidence="10" type="primary">B4galnt1</name>
    <name type="synonym">Galgt</name>
    <name type="synonym">Galgt1</name>
</gene>
<reference key="1">
    <citation type="journal article" date="1994" name="Biochem. J.">
        <title>Beta-1,4-N-acetylgalactosaminyltransferase can synthesize both asialoglycosphingolipid GM2 and glycosphingolipid GM2 in vitro and in vivo: isolation and characterization of a beta-1,4-N-acetylgalactosaminyltransferase cDNA clone from rat ascites hepatoma cell line AH7974F.</title>
        <authorList>
            <person name="Hidari J.K."/>
            <person name="Ichikawa S."/>
            <person name="Furukawa K."/>
            <person name="Yamasaki M."/>
            <person name="Hirabayashi Y."/>
        </authorList>
    </citation>
    <scope>NUCLEOTIDE SEQUENCE [MRNA]</scope>
    <scope>FUNCTION</scope>
    <scope>CATALYTIC ACTIVITY</scope>
    <scope>PATHWAY</scope>
    <scope>TISSUE SPECIFICITY</scope>
</reference>
<reference key="2">
    <citation type="journal article" date="2004" name="Genome Res.">
        <title>The status, quality, and expansion of the NIH full-length cDNA project: the Mammalian Gene Collection (MGC).</title>
        <authorList>
            <consortium name="The MGC Project Team"/>
        </authorList>
    </citation>
    <scope>NUCLEOTIDE SEQUENCE [LARGE SCALE MRNA]</scope>
    <source>
        <tissue>Testis</tissue>
    </source>
</reference>
<reference key="3">
    <citation type="journal article" date="1988" name="Proc. Natl. Acad. Sci. U.S.A.">
        <title>Both GA2, GM2, and GD2 synthases and GM1b, GD1a, and GT1b synthases are single enzymes in Golgi vesicles from rat liver.</title>
        <authorList>
            <person name="Pohlentz G."/>
            <person name="Klein D."/>
            <person name="Schwarzmann G."/>
            <person name="Schmitz D."/>
            <person name="Sandhoff K."/>
        </authorList>
    </citation>
    <scope>FUNCTION</scope>
    <scope>CATALYTIC ACTIVITY</scope>
    <scope>SUBCELLULAR LOCATION</scope>
    <scope>TISSUE SPECIFICITY</scope>
    <scope>BIOPHYSICOCHEMICAL PROPERTIES</scope>
</reference>
<reference key="4">
    <citation type="journal article" date="1992" name="Glycobiology">
        <title>The c-series gangliosides GT3, GT2 and GP1c are formed in rat liver Golgi by the same set of glycosyltransferases that catalyse the biosynthesis of asialo-, a- and b-series gangliosides.</title>
        <authorList>
            <person name="Iber H."/>
            <person name="Zacharias C."/>
            <person name="Sandhoff K."/>
        </authorList>
    </citation>
    <scope>FUNCTION</scope>
    <scope>CATALYTIC ACTIVITY</scope>
    <scope>SUBCELLULAR LOCATION</scope>
    <scope>TISSUE SPECIFICITY</scope>
    <scope>BIOPHYSICOCHEMICAL PROPERTIES</scope>
</reference>